<reference key="1">
    <citation type="journal article" date="2000" name="Nature">
        <title>Sequence and analysis of chromosome 3 of the plant Arabidopsis thaliana.</title>
        <authorList>
            <person name="Salanoubat M."/>
            <person name="Lemcke K."/>
            <person name="Rieger M."/>
            <person name="Ansorge W."/>
            <person name="Unseld M."/>
            <person name="Fartmann B."/>
            <person name="Valle G."/>
            <person name="Bloecker H."/>
            <person name="Perez-Alonso M."/>
            <person name="Obermaier B."/>
            <person name="Delseny M."/>
            <person name="Boutry M."/>
            <person name="Grivell L.A."/>
            <person name="Mache R."/>
            <person name="Puigdomenech P."/>
            <person name="De Simone V."/>
            <person name="Choisne N."/>
            <person name="Artiguenave F."/>
            <person name="Robert C."/>
            <person name="Brottier P."/>
            <person name="Wincker P."/>
            <person name="Cattolico L."/>
            <person name="Weissenbach J."/>
            <person name="Saurin W."/>
            <person name="Quetier F."/>
            <person name="Schaefer M."/>
            <person name="Mueller-Auer S."/>
            <person name="Gabel C."/>
            <person name="Fuchs M."/>
            <person name="Benes V."/>
            <person name="Wurmbach E."/>
            <person name="Drzonek H."/>
            <person name="Erfle H."/>
            <person name="Jordan N."/>
            <person name="Bangert S."/>
            <person name="Wiedelmann R."/>
            <person name="Kranz H."/>
            <person name="Voss H."/>
            <person name="Holland R."/>
            <person name="Brandt P."/>
            <person name="Nyakatura G."/>
            <person name="Vezzi A."/>
            <person name="D'Angelo M."/>
            <person name="Pallavicini A."/>
            <person name="Toppo S."/>
            <person name="Simionati B."/>
            <person name="Conrad A."/>
            <person name="Hornischer K."/>
            <person name="Kauer G."/>
            <person name="Loehnert T.-H."/>
            <person name="Nordsiek G."/>
            <person name="Reichelt J."/>
            <person name="Scharfe M."/>
            <person name="Schoen O."/>
            <person name="Bargues M."/>
            <person name="Terol J."/>
            <person name="Climent J."/>
            <person name="Navarro P."/>
            <person name="Collado C."/>
            <person name="Perez-Perez A."/>
            <person name="Ottenwaelder B."/>
            <person name="Duchemin D."/>
            <person name="Cooke R."/>
            <person name="Laudie M."/>
            <person name="Berger-Llauro C."/>
            <person name="Purnelle B."/>
            <person name="Masuy D."/>
            <person name="de Haan M."/>
            <person name="Maarse A.C."/>
            <person name="Alcaraz J.-P."/>
            <person name="Cottet A."/>
            <person name="Casacuberta E."/>
            <person name="Monfort A."/>
            <person name="Argiriou A."/>
            <person name="Flores M."/>
            <person name="Liguori R."/>
            <person name="Vitale D."/>
            <person name="Mannhaupt G."/>
            <person name="Haase D."/>
            <person name="Schoof H."/>
            <person name="Rudd S."/>
            <person name="Zaccaria P."/>
            <person name="Mewes H.-W."/>
            <person name="Mayer K.F.X."/>
            <person name="Kaul S."/>
            <person name="Town C.D."/>
            <person name="Koo H.L."/>
            <person name="Tallon L.J."/>
            <person name="Jenkins J."/>
            <person name="Rooney T."/>
            <person name="Rizzo M."/>
            <person name="Walts A."/>
            <person name="Utterback T."/>
            <person name="Fujii C.Y."/>
            <person name="Shea T.P."/>
            <person name="Creasy T.H."/>
            <person name="Haas B."/>
            <person name="Maiti R."/>
            <person name="Wu D."/>
            <person name="Peterson J."/>
            <person name="Van Aken S."/>
            <person name="Pai G."/>
            <person name="Militscher J."/>
            <person name="Sellers P."/>
            <person name="Gill J.E."/>
            <person name="Feldblyum T.V."/>
            <person name="Preuss D."/>
            <person name="Lin X."/>
            <person name="Nierman W.C."/>
            <person name="Salzberg S.L."/>
            <person name="White O."/>
            <person name="Venter J.C."/>
            <person name="Fraser C.M."/>
            <person name="Kaneko T."/>
            <person name="Nakamura Y."/>
            <person name="Sato S."/>
            <person name="Kato T."/>
            <person name="Asamizu E."/>
            <person name="Sasamoto S."/>
            <person name="Kimura T."/>
            <person name="Idesawa K."/>
            <person name="Kawashima K."/>
            <person name="Kishida Y."/>
            <person name="Kiyokawa C."/>
            <person name="Kohara M."/>
            <person name="Matsumoto M."/>
            <person name="Matsuno A."/>
            <person name="Muraki A."/>
            <person name="Nakayama S."/>
            <person name="Nakazaki N."/>
            <person name="Shinpo S."/>
            <person name="Takeuchi C."/>
            <person name="Wada T."/>
            <person name="Watanabe A."/>
            <person name="Yamada M."/>
            <person name="Yasuda M."/>
            <person name="Tabata S."/>
        </authorList>
    </citation>
    <scope>NUCLEOTIDE SEQUENCE [LARGE SCALE GENOMIC DNA]</scope>
    <source>
        <strain>cv. Columbia</strain>
    </source>
</reference>
<reference key="2">
    <citation type="journal article" date="2017" name="Plant J.">
        <title>Araport11: a complete reannotation of the Arabidopsis thaliana reference genome.</title>
        <authorList>
            <person name="Cheng C.Y."/>
            <person name="Krishnakumar V."/>
            <person name="Chan A.P."/>
            <person name="Thibaud-Nissen F."/>
            <person name="Schobel S."/>
            <person name="Town C.D."/>
        </authorList>
    </citation>
    <scope>GENOME REANNOTATION</scope>
    <source>
        <strain>cv. Columbia</strain>
    </source>
</reference>
<reference key="3">
    <citation type="journal article" date="2003" name="Science">
        <title>Empirical analysis of transcriptional activity in the Arabidopsis genome.</title>
        <authorList>
            <person name="Yamada K."/>
            <person name="Lim J."/>
            <person name="Dale J.M."/>
            <person name="Chen H."/>
            <person name="Shinn P."/>
            <person name="Palm C.J."/>
            <person name="Southwick A.M."/>
            <person name="Wu H.C."/>
            <person name="Kim C.J."/>
            <person name="Nguyen M."/>
            <person name="Pham P.K."/>
            <person name="Cheuk R.F."/>
            <person name="Karlin-Newmann G."/>
            <person name="Liu S.X."/>
            <person name="Lam B."/>
            <person name="Sakano H."/>
            <person name="Wu T."/>
            <person name="Yu G."/>
            <person name="Miranda M."/>
            <person name="Quach H.L."/>
            <person name="Tripp M."/>
            <person name="Chang C.H."/>
            <person name="Lee J.M."/>
            <person name="Toriumi M.J."/>
            <person name="Chan M.M."/>
            <person name="Tang C.C."/>
            <person name="Onodera C.S."/>
            <person name="Deng J.M."/>
            <person name="Akiyama K."/>
            <person name="Ansari Y."/>
            <person name="Arakawa T."/>
            <person name="Banh J."/>
            <person name="Banno F."/>
            <person name="Bowser L."/>
            <person name="Brooks S.Y."/>
            <person name="Carninci P."/>
            <person name="Chao Q."/>
            <person name="Choy N."/>
            <person name="Enju A."/>
            <person name="Goldsmith A.D."/>
            <person name="Gurjal M."/>
            <person name="Hansen N.F."/>
            <person name="Hayashizaki Y."/>
            <person name="Johnson-Hopson C."/>
            <person name="Hsuan V.W."/>
            <person name="Iida K."/>
            <person name="Karnes M."/>
            <person name="Khan S."/>
            <person name="Koesema E."/>
            <person name="Ishida J."/>
            <person name="Jiang P.X."/>
            <person name="Jones T."/>
            <person name="Kawai J."/>
            <person name="Kamiya A."/>
            <person name="Meyers C."/>
            <person name="Nakajima M."/>
            <person name="Narusaka M."/>
            <person name="Seki M."/>
            <person name="Sakurai T."/>
            <person name="Satou M."/>
            <person name="Tamse R."/>
            <person name="Vaysberg M."/>
            <person name="Wallender E.K."/>
            <person name="Wong C."/>
            <person name="Yamamura Y."/>
            <person name="Yuan S."/>
            <person name="Shinozaki K."/>
            <person name="Davis R.W."/>
            <person name="Theologis A."/>
            <person name="Ecker J.R."/>
        </authorList>
    </citation>
    <scope>NUCLEOTIDE SEQUENCE [LARGE SCALE MRNA]</scope>
    <source>
        <strain>cv. Columbia</strain>
    </source>
</reference>
<reference key="4">
    <citation type="journal article" date="2001" name="Plant Physiol.">
        <title>The organization of cytoplasmic ribosomal protein genes in the Arabidopsis genome.</title>
        <authorList>
            <person name="Barakat A."/>
            <person name="Szick-Miranda K."/>
            <person name="Chang I.-F."/>
            <person name="Guyot R."/>
            <person name="Blanc G."/>
            <person name="Cooke R."/>
            <person name="Delseny M."/>
            <person name="Bailey-Serres J."/>
        </authorList>
    </citation>
    <scope>GENE FAMILY ORGANIZATION</scope>
    <scope>NOMENCLATURE</scope>
</reference>
<reference key="5">
    <citation type="journal article" date="2023" name="Plant Cell">
        <title>An updated nomenclature for plant ribosomal protein genes.</title>
        <authorList>
            <person name="Scarpin M.R."/>
            <person name="Busche M."/>
            <person name="Martinez R.E."/>
            <person name="Harper L.C."/>
            <person name="Reiser L."/>
            <person name="Szakonyi D."/>
            <person name="Merchante C."/>
            <person name="Lan T."/>
            <person name="Xiong W."/>
            <person name="Mo B."/>
            <person name="Tang G."/>
            <person name="Chen X."/>
            <person name="Bailey-Serres J."/>
            <person name="Browning K.S."/>
            <person name="Brunkard J.O."/>
        </authorList>
    </citation>
    <scope>NOMENCLATURE</scope>
</reference>
<keyword id="KW-0597">Phosphoprotein</keyword>
<keyword id="KW-1185">Reference proteome</keyword>
<keyword id="KW-0687">Ribonucleoprotein</keyword>
<keyword id="KW-0689">Ribosomal protein</keyword>
<name>RLA24_ARATH</name>
<comment type="function">
    <text evidence="1">Plays an important role in the elongation step of protein synthesis.</text>
</comment>
<comment type="subunit">
    <text>P1 and P2 exist as dimers at the large ribosomal subunit.</text>
</comment>
<comment type="similarity">
    <text evidence="5">Belongs to the eukaryotic ribosomal protein P1/P2 family.</text>
</comment>
<evidence type="ECO:0000250" key="1"/>
<evidence type="ECO:0000250" key="2">
    <source>
        <dbReference type="UniProtKB" id="Q9LH85"/>
    </source>
</evidence>
<evidence type="ECO:0000256" key="3">
    <source>
        <dbReference type="SAM" id="MobiDB-lite"/>
    </source>
</evidence>
<evidence type="ECO:0000303" key="4">
    <source>
    </source>
</evidence>
<evidence type="ECO:0000305" key="5"/>
<proteinExistence type="inferred from homology"/>
<gene>
    <name type="primary">RPP2D</name>
    <name type="ordered locus">At3g44590</name>
    <name type="ORF">F14L2_140</name>
</gene>
<protein>
    <recommendedName>
        <fullName evidence="4">Large ribosomal subunit protein P2w</fullName>
    </recommendedName>
    <alternativeName>
        <fullName>60S acidic ribosomal protein P2-4</fullName>
    </alternativeName>
</protein>
<accession>Q9LXM8</accession>
<feature type="chain" id="PRO_0000245777" description="Large ribosomal subunit protein P2w">
    <location>
        <begin position="1"/>
        <end position="111"/>
    </location>
</feature>
<feature type="region of interest" description="Disordered" evidence="3">
    <location>
        <begin position="63"/>
        <end position="111"/>
    </location>
</feature>
<feature type="compositionally biased region" description="Basic and acidic residues" evidence="3">
    <location>
        <begin position="88"/>
        <end position="98"/>
    </location>
</feature>
<feature type="modified residue" description="Phosphoserine" evidence="2">
    <location>
        <position position="101"/>
    </location>
</feature>
<sequence>MKVAAAFLLAVLGGNANPSADNIKDIIGAVGADVDGESIELLLKEVSGKDIAELIASGREKLASVPSGGGVAVSAAPSSGGGGAAAPAEKKEAKKEEKEESDDDMGFSLFE</sequence>
<dbReference type="EMBL" id="AL353818">
    <property type="protein sequence ID" value="CAB88541.1"/>
    <property type="molecule type" value="Genomic_DNA"/>
</dbReference>
<dbReference type="EMBL" id="CP002686">
    <property type="protein sequence ID" value="AEE77918.1"/>
    <property type="molecule type" value="Genomic_DNA"/>
</dbReference>
<dbReference type="EMBL" id="CP002686">
    <property type="protein sequence ID" value="AEE77919.1"/>
    <property type="molecule type" value="Genomic_DNA"/>
</dbReference>
<dbReference type="EMBL" id="BT004748">
    <property type="protein sequence ID" value="AAO44014.1"/>
    <property type="molecule type" value="mRNA"/>
</dbReference>
<dbReference type="PIR" id="T48939">
    <property type="entry name" value="T48939"/>
</dbReference>
<dbReference type="RefSeq" id="NP_190045.1">
    <property type="nucleotide sequence ID" value="NM_114327.5"/>
</dbReference>
<dbReference type="RefSeq" id="NP_974384.1">
    <property type="nucleotide sequence ID" value="NM_202655.2"/>
</dbReference>
<dbReference type="SMR" id="Q9LXM8"/>
<dbReference type="BioGRID" id="8904">
    <property type="interactions" value="47"/>
</dbReference>
<dbReference type="FunCoup" id="Q9LXM8">
    <property type="interactions" value="2308"/>
</dbReference>
<dbReference type="IntAct" id="Q9LXM8">
    <property type="interactions" value="4"/>
</dbReference>
<dbReference type="STRING" id="3702.Q9LXM8"/>
<dbReference type="iPTMnet" id="Q9LXM8"/>
<dbReference type="PaxDb" id="3702-AT3G44590.1"/>
<dbReference type="ProteomicsDB" id="228156"/>
<dbReference type="EnsemblPlants" id="AT3G44590.1">
    <property type="protein sequence ID" value="AT3G44590.1"/>
    <property type="gene ID" value="AT3G44590"/>
</dbReference>
<dbReference type="EnsemblPlants" id="AT3G44590.2">
    <property type="protein sequence ID" value="AT3G44590.2"/>
    <property type="gene ID" value="AT3G44590"/>
</dbReference>
<dbReference type="GeneID" id="823584"/>
<dbReference type="Gramene" id="AT3G44590.1">
    <property type="protein sequence ID" value="AT3G44590.1"/>
    <property type="gene ID" value="AT3G44590"/>
</dbReference>
<dbReference type="Gramene" id="AT3G44590.2">
    <property type="protein sequence ID" value="AT3G44590.2"/>
    <property type="gene ID" value="AT3G44590"/>
</dbReference>
<dbReference type="KEGG" id="ath:AT3G44590"/>
<dbReference type="Araport" id="AT3G44590"/>
<dbReference type="TAIR" id="AT3G44590"/>
<dbReference type="eggNOG" id="KOG3449">
    <property type="taxonomic scope" value="Eukaryota"/>
</dbReference>
<dbReference type="HOGENOM" id="CLU_114656_0_2_1"/>
<dbReference type="InParanoid" id="Q9LXM8"/>
<dbReference type="OMA" id="ICKAVHI"/>
<dbReference type="PhylomeDB" id="Q9LXM8"/>
<dbReference type="PRO" id="PR:Q9LXM8"/>
<dbReference type="Proteomes" id="UP000006548">
    <property type="component" value="Chromosome 3"/>
</dbReference>
<dbReference type="ExpressionAtlas" id="Q9LXM8">
    <property type="expression patterns" value="baseline and differential"/>
</dbReference>
<dbReference type="GO" id="GO:0005829">
    <property type="term" value="C:cytosol"/>
    <property type="evidence" value="ECO:0007005"/>
    <property type="project" value="TAIR"/>
</dbReference>
<dbReference type="GO" id="GO:0022625">
    <property type="term" value="C:cytosolic large ribosomal subunit"/>
    <property type="evidence" value="ECO:0007669"/>
    <property type="project" value="InterPro"/>
</dbReference>
<dbReference type="GO" id="GO:0022626">
    <property type="term" value="C:cytosolic ribosome"/>
    <property type="evidence" value="ECO:0007005"/>
    <property type="project" value="TAIR"/>
</dbReference>
<dbReference type="GO" id="GO:0099503">
    <property type="term" value="C:secretory vesicle"/>
    <property type="evidence" value="ECO:0007005"/>
    <property type="project" value="TAIR"/>
</dbReference>
<dbReference type="GO" id="GO:0003735">
    <property type="term" value="F:structural constituent of ribosome"/>
    <property type="evidence" value="ECO:0000314"/>
    <property type="project" value="CAFA"/>
</dbReference>
<dbReference type="GO" id="GO:0002182">
    <property type="term" value="P:cytoplasmic translational elongation"/>
    <property type="evidence" value="ECO:0007669"/>
    <property type="project" value="InterPro"/>
</dbReference>
<dbReference type="CDD" id="cd05833">
    <property type="entry name" value="Ribosomal_P2"/>
    <property type="match status" value="1"/>
</dbReference>
<dbReference type="FunFam" id="1.10.10.1410:FF:000002">
    <property type="entry name" value="60S acidic ribosomal protein P2"/>
    <property type="match status" value="1"/>
</dbReference>
<dbReference type="Gene3D" id="1.10.10.1410">
    <property type="match status" value="1"/>
</dbReference>
<dbReference type="HAMAP" id="MF_01478">
    <property type="entry name" value="Ribosomal_L12_arch"/>
    <property type="match status" value="1"/>
</dbReference>
<dbReference type="InterPro" id="IPR038716">
    <property type="entry name" value="P1/P2_N_sf"/>
</dbReference>
<dbReference type="InterPro" id="IPR027534">
    <property type="entry name" value="Ribosomal_P1/P2"/>
</dbReference>
<dbReference type="InterPro" id="IPR044076">
    <property type="entry name" value="Ribosomal_P2"/>
</dbReference>
<dbReference type="PANTHER" id="PTHR21141">
    <property type="entry name" value="60S ACIDIC RIBOSOMAL PROTEIN FAMILY MEMBER"/>
    <property type="match status" value="1"/>
</dbReference>
<dbReference type="PANTHER" id="PTHR21141:SF115">
    <property type="entry name" value="LARGE RIBOSOMAL SUBUNIT PROTEIN P2W"/>
    <property type="match status" value="1"/>
</dbReference>
<dbReference type="Pfam" id="PF00428">
    <property type="entry name" value="Ribosomal_60s"/>
    <property type="match status" value="1"/>
</dbReference>
<organism>
    <name type="scientific">Arabidopsis thaliana</name>
    <name type="common">Mouse-ear cress</name>
    <dbReference type="NCBI Taxonomy" id="3702"/>
    <lineage>
        <taxon>Eukaryota</taxon>
        <taxon>Viridiplantae</taxon>
        <taxon>Streptophyta</taxon>
        <taxon>Embryophyta</taxon>
        <taxon>Tracheophyta</taxon>
        <taxon>Spermatophyta</taxon>
        <taxon>Magnoliopsida</taxon>
        <taxon>eudicotyledons</taxon>
        <taxon>Gunneridae</taxon>
        <taxon>Pentapetalae</taxon>
        <taxon>rosids</taxon>
        <taxon>malvids</taxon>
        <taxon>Brassicales</taxon>
        <taxon>Brassicaceae</taxon>
        <taxon>Camelineae</taxon>
        <taxon>Arabidopsis</taxon>
    </lineage>
</organism>